<sequence>MATFKDACYHYKKLNKLNSLVLKLGANDEWRPAPVTKYKGWCLDCCQYTNLTYCRGCALYHVCQWCSQYNRCFLDEEPHLLRMRTFKDVVTKEDIEGLLTMYETLFPINEKLVNKFINSVKQRKCRNEYLLEWYNHLLMPITLQALTINLEDNVYYMFGYYDCMEHENQTPFQFVNLLEKYDKLLLDDRNFHRMSHLPVILQQEYALRYFSKSRFLSKGKKRLSRSDFSDNLMEDRHSPTSLMQVVRNCISIHIDDCEWNKACTLIVDARNYISIMNSSYTEHYSVSQRCKLFTKYKFGIVSKLVKPNYIFSSHESCALNVHNCKWCQINNHYKVWEDFRLRKIYNNVMDFIRALVKSNVNVGHCSSQESVYKYVPDLFLICKTEKWSEAVEMLFNYLEPVNVNGTEYVLLDYEVNWEVRGLVMQNMDGKVPRILNMNDTKKILSAMIFDWFDTRYMRETPMTTSTTNQLRTLNKRNELIDEYDLELSDVE</sequence>
<keyword id="KW-1035">Host cytoplasm</keyword>
<keyword id="KW-1037">Host cytoskeleton</keyword>
<keyword id="KW-0945">Host-virus interaction</keyword>
<keyword id="KW-1090">Inhibition of host innate immune response by virus</keyword>
<keyword id="KW-1092">Inhibition of host IRF3 by virus</keyword>
<keyword id="KW-1093">Inhibition of host IRF7 by virus</keyword>
<keyword id="KW-1113">Inhibition of host RLR pathway by virus</keyword>
<keyword id="KW-0922">Interferon antiviral system evasion</keyword>
<keyword id="KW-0479">Metal-binding</keyword>
<keyword id="KW-0694">RNA-binding</keyword>
<keyword id="KW-0899">Viral immunoevasion</keyword>
<organismHost>
    <name type="scientific">Bos taurus</name>
    <name type="common">Bovine</name>
    <dbReference type="NCBI Taxonomy" id="9913"/>
</organismHost>
<organism>
    <name type="scientific">Rotavirus A (strain RVA/Cow/United States/B641/XXXX/G6P7[5])</name>
    <name type="common">RV-A</name>
    <dbReference type="NCBI Taxonomy" id="10928"/>
    <lineage>
        <taxon>Viruses</taxon>
        <taxon>Riboviria</taxon>
        <taxon>Orthornavirae</taxon>
        <taxon>Duplornaviricota</taxon>
        <taxon>Resentoviricetes</taxon>
        <taxon>Reovirales</taxon>
        <taxon>Sedoreoviridae</taxon>
        <taxon>Rotavirus</taxon>
        <taxon>Rotavirus A</taxon>
    </lineage>
</organism>
<feature type="chain" id="PRO_0000367819" description="Non-structural protein 1">
    <location>
        <begin position="1"/>
        <end position="491"/>
    </location>
</feature>
<feature type="region of interest" description="RNA-binding" evidence="1">
    <location>
        <begin position="1"/>
        <end position="81"/>
    </location>
</feature>
<feature type="region of interest" description="Zinc-binding domain" evidence="1 2">
    <location>
        <begin position="42"/>
        <end position="79"/>
    </location>
</feature>
<feature type="region of interest" description="Important for cytoskeleton localization" evidence="1">
    <location>
        <begin position="82"/>
        <end position="176"/>
    </location>
</feature>
<feature type="region of interest" description="Interaction with host IRF3" evidence="1">
    <location>
        <begin position="320"/>
        <end position="491"/>
    </location>
</feature>
<feature type="short sequence motif" description="pLxIS motif" evidence="1">
    <location>
        <begin position="485"/>
        <end position="488"/>
    </location>
</feature>
<feature type="mutagenesis site" description="90% loss of IRF3 binding. Complete loss of IRF3 degradation." evidence="2">
    <original>C</original>
    <variation>A</variation>
    <location>
        <position position="54"/>
    </location>
</feature>
<feature type="mutagenesis site" description="95% loss of IRF3 binding. Complete loss of IRF3 degradation." evidence="2">
    <original>H</original>
    <variation>L</variation>
    <location>
        <position position="79"/>
    </location>
</feature>
<feature type="mutagenesis site" description="70% loss of IRF3 binding. No effect on IRF3 degradation." evidence="2">
    <original>H</original>
    <variation>L</variation>
    <location>
        <position position="136"/>
    </location>
</feature>
<protein>
    <recommendedName>
        <fullName evidence="1">Non-structural protein 1</fullName>
        <shortName evidence="1">NSP1</shortName>
    </recommendedName>
    <alternativeName>
        <fullName evidence="1">NCVP2</fullName>
    </alternativeName>
    <alternativeName>
        <fullName evidence="1">Non-structural RNA-binding protein 53</fullName>
        <shortName evidence="1">NS53</shortName>
    </alternativeName>
</protein>
<name>NSP1_ROTB4</name>
<reference key="1">
    <citation type="journal article" date="2003" name="J. Gen. Virol.">
        <title>Translational regulation of rotavirus gene expression.</title>
        <authorList>
            <person name="Mitzel D.N."/>
            <person name="Weisend C.M."/>
            <person name="White M.W."/>
            <person name="Hardy M.E."/>
        </authorList>
    </citation>
    <scope>NUCLEOTIDE SEQUENCE [MRNA]</scope>
</reference>
<reference key="2">
    <citation type="journal article" date="2002" name="J. Virol.">
        <title>Interferon regulatory factor 3 is a cellular partner of rotavirus NSP1.</title>
        <authorList>
            <person name="Graff J.W."/>
            <person name="Mitzel D.N."/>
            <person name="Weisend C.M."/>
            <person name="Flenniken M.L."/>
            <person name="Hardy M.E."/>
        </authorList>
    </citation>
    <scope>INTERACTION WITH HUMAN IRF3</scope>
</reference>
<reference key="3">
    <citation type="journal article" date="2007" name="J. Gen. Virol.">
        <title>Zinc-binding domain of rotavirus NSP1 is required for proteasome-dependent degradation of IRF3 and autoregulatory NSP1 stability.</title>
        <authorList>
            <person name="Graff J.W."/>
            <person name="Ewen J."/>
            <person name="Ettayebi K."/>
            <person name="Hardy M.E."/>
        </authorList>
    </citation>
    <scope>FUNCTION</scope>
    <scope>MUTAGENESIS OF CYS-54; HIS-79 AND HIS-136</scope>
</reference>
<dbReference type="EMBL" id="AF458087">
    <property type="protein sequence ID" value="AAM21601.1"/>
    <property type="molecule type" value="mRNA"/>
</dbReference>
<dbReference type="GO" id="GO:0030430">
    <property type="term" value="C:host cell cytoplasm"/>
    <property type="evidence" value="ECO:0007669"/>
    <property type="project" value="UniProtKB-UniRule"/>
</dbReference>
<dbReference type="GO" id="GO:0044163">
    <property type="term" value="C:host cytoskeleton"/>
    <property type="evidence" value="ECO:0007669"/>
    <property type="project" value="UniProtKB-SubCell"/>
</dbReference>
<dbReference type="GO" id="GO:0046872">
    <property type="term" value="F:metal ion binding"/>
    <property type="evidence" value="ECO:0007669"/>
    <property type="project" value="UniProtKB-UniRule"/>
</dbReference>
<dbReference type="GO" id="GO:0003723">
    <property type="term" value="F:RNA binding"/>
    <property type="evidence" value="ECO:0007669"/>
    <property type="project" value="UniProtKB-UniRule"/>
</dbReference>
<dbReference type="GO" id="GO:0039548">
    <property type="term" value="P:symbiont-mediated suppression of host cytoplasmic pattern recognition receptor signaling pathway via inhibition of IRF3 activity"/>
    <property type="evidence" value="ECO:0007669"/>
    <property type="project" value="UniProtKB-UniRule"/>
</dbReference>
<dbReference type="GO" id="GO:0039557">
    <property type="term" value="P:symbiont-mediated suppression of host cytoplasmic pattern recognition receptor signaling pathway via inhibition of IRF7 activity"/>
    <property type="evidence" value="ECO:0007669"/>
    <property type="project" value="UniProtKB-UniRule"/>
</dbReference>
<dbReference type="HAMAP" id="MF_04088">
    <property type="entry name" value="ROTA_NSP1"/>
    <property type="match status" value="1"/>
</dbReference>
<dbReference type="InterPro" id="IPR002148">
    <property type="entry name" value="Rotavirus_NSP1"/>
</dbReference>
<dbReference type="Pfam" id="PF00981">
    <property type="entry name" value="Rota_NS53"/>
    <property type="match status" value="1"/>
</dbReference>
<comment type="function">
    <text evidence="1 2">Plays a role in the inhibition of host innate immunity by inducing the degradation of key host factors required to activate interferon production such as IRF3, IRF5 or IRF7. Associates with components of cullin RING ligases (CRLs) including CUL1 or CUL3, which are essential multisubunit ubiquitination complexes, to modulate their activities.</text>
</comment>
<comment type="subunit">
    <text evidence="1">Interacts (via C-terminus) with host IRF3; this interaction leads to IRF3 degradation. Interacts with host IRF7; this interaction leads to IRF7 degradation. Interacts with host CUL1 and CUL3.</text>
</comment>
<comment type="subcellular location">
    <subcellularLocation>
        <location evidence="1">Host cytoplasm</location>
        <location evidence="1">Host cytoskeleton</location>
    </subcellularLocation>
</comment>
<comment type="domain">
    <text evidence="1 2">The integrity of the zinc-binding domain in NSP1 is important for degradation of host IRF3.</text>
</comment>
<comment type="domain">
    <text evidence="1">The pLxIS motif targets host IRF3 for degradation; however phosphorylation of NSP1 pLxIS motif is not required for its activity.</text>
</comment>
<comment type="similarity">
    <text evidence="1">Belongs to the rotavirus NSP1 family.</text>
</comment>
<accession>Q8JZ13</accession>
<proteinExistence type="evidence at protein level"/>
<evidence type="ECO:0000255" key="1">
    <source>
        <dbReference type="HAMAP-Rule" id="MF_04088"/>
    </source>
</evidence>
<evidence type="ECO:0000269" key="2">
    <source>
    </source>
</evidence>